<comment type="similarity">
    <text evidence="3">Belongs to the EOLA family.</text>
</comment>
<organism>
    <name type="scientific">Pongo abelii</name>
    <name type="common">Sumatran orangutan</name>
    <name type="synonym">Pongo pygmaeus abelii</name>
    <dbReference type="NCBI Taxonomy" id="9601"/>
    <lineage>
        <taxon>Eukaryota</taxon>
        <taxon>Metazoa</taxon>
        <taxon>Chordata</taxon>
        <taxon>Craniata</taxon>
        <taxon>Vertebrata</taxon>
        <taxon>Euteleostomi</taxon>
        <taxon>Mammalia</taxon>
        <taxon>Eutheria</taxon>
        <taxon>Euarchontoglires</taxon>
        <taxon>Primates</taxon>
        <taxon>Haplorrhini</taxon>
        <taxon>Catarrhini</taxon>
        <taxon>Hominidae</taxon>
        <taxon>Pongo</taxon>
    </lineage>
</organism>
<proteinExistence type="evidence at transcript level"/>
<evidence type="ECO:0000250" key="1">
    <source>
        <dbReference type="UniProtKB" id="Q8TE69"/>
    </source>
</evidence>
<evidence type="ECO:0000255" key="2"/>
<evidence type="ECO:0000305" key="3"/>
<evidence type="ECO:0000312" key="4">
    <source>
        <dbReference type="Proteomes" id="UP000001595"/>
    </source>
</evidence>
<accession>Q5RAX6</accession>
<accession>A0A2J8S3X2</accession>
<accession>Q5RB05</accession>
<protein>
    <recommendedName>
        <fullName evidence="1">EOLA-like protein</fullName>
    </recommendedName>
</protein>
<dbReference type="EMBL" id="NDHI03003613">
    <property type="protein sequence ID" value="PNJ15452.1"/>
    <property type="molecule type" value="Genomic_DNA"/>
</dbReference>
<dbReference type="EMBL" id="CR858854">
    <property type="protein sequence ID" value="CAH91055.1"/>
    <property type="molecule type" value="mRNA"/>
</dbReference>
<dbReference type="EMBL" id="CR858885">
    <property type="protein sequence ID" value="CAH91084.1"/>
    <property type="molecule type" value="mRNA"/>
</dbReference>
<dbReference type="RefSeq" id="NP_001125611.1">
    <property type="nucleotide sequence ID" value="NM_001132139.1"/>
</dbReference>
<dbReference type="RefSeq" id="XP_063577056.1">
    <property type="nucleotide sequence ID" value="XM_063720986.1"/>
</dbReference>
<dbReference type="SMR" id="Q5RAX6"/>
<dbReference type="FunCoup" id="Q5RAX6">
    <property type="interactions" value="87"/>
</dbReference>
<dbReference type="Ensembl" id="ENSPPYT00000051340.1">
    <property type="protein sequence ID" value="ENSPPYP00000042825.1"/>
    <property type="gene ID" value="ENSPPYG00000033750.1"/>
</dbReference>
<dbReference type="GeneID" id="100172528"/>
<dbReference type="KEGG" id="pon:100172528"/>
<dbReference type="CTD" id="541578"/>
<dbReference type="eggNOG" id="ENOG502RZ9S">
    <property type="taxonomic scope" value="Eukaryota"/>
</dbReference>
<dbReference type="GeneTree" id="ENSGT00390000012182"/>
<dbReference type="InParanoid" id="Q5RAX6"/>
<dbReference type="OrthoDB" id="2865258at2759"/>
<dbReference type="Proteomes" id="UP000001595">
    <property type="component" value="Chromosome X"/>
</dbReference>
<dbReference type="Gene3D" id="2.30.130.30">
    <property type="entry name" value="Hypothetical protein"/>
    <property type="match status" value="1"/>
</dbReference>
<dbReference type="InterPro" id="IPR007374">
    <property type="entry name" value="ASCH_domain"/>
</dbReference>
<dbReference type="InterPro" id="IPR033615">
    <property type="entry name" value="EOLA1/EOLA2"/>
</dbReference>
<dbReference type="InterPro" id="IPR015947">
    <property type="entry name" value="PUA-like_sf"/>
</dbReference>
<dbReference type="PANTHER" id="PTHR31666">
    <property type="entry name" value="PROTEIN CXORF40A-RELATED"/>
    <property type="match status" value="1"/>
</dbReference>
<dbReference type="PANTHER" id="PTHR31666:SF0">
    <property type="entry name" value="PROTEIN EOLA1-RELATED"/>
    <property type="match status" value="1"/>
</dbReference>
<dbReference type="SMART" id="SM01022">
    <property type="entry name" value="ASCH"/>
    <property type="match status" value="1"/>
</dbReference>
<dbReference type="SUPFAM" id="SSF88697">
    <property type="entry name" value="PUA domain-like"/>
    <property type="match status" value="1"/>
</dbReference>
<feature type="chain" id="PRO_0000079735" description="EOLA-like protein">
    <location>
        <begin position="1"/>
        <end position="158"/>
    </location>
</feature>
<feature type="domain" description="ASCH" evidence="2">
    <location>
        <begin position="6"/>
        <end position="92"/>
    </location>
</feature>
<feature type="sequence conflict" description="In Ref. 2; CAH91055." evidence="3" ref="2">
    <original>T</original>
    <variation>I</variation>
    <location>
        <position position="122"/>
    </location>
</feature>
<feature type="sequence conflict" description="In Ref. 2; CAH91084." evidence="3" ref="2">
    <original>V</original>
    <variation>A</variation>
    <location>
        <position position="158"/>
    </location>
</feature>
<name>EOLAL_PONAB</name>
<sequence>MKFGCLSFRQPYAGFVLNGVKTVETRWRPLLSSQRNCTIAIHIAHRDWEGDAWWELLVERFGMTPAQIQALLREGEKFGRGVIAGLVDIGETLQCPEDLTPDEVVELENQAVLTNLKQKYLTVISNPRWLLEPIPRKGGRDVFQVDIPEHLIPLGHEV</sequence>
<reference evidence="4" key="1">
    <citation type="journal article" date="2018" name="Science">
        <title>High-resolution comparative analysis of great ape genomes.</title>
        <authorList>
            <person name="Kronenberg Z.N."/>
            <person name="Fiddes I.T."/>
            <person name="Gordon D."/>
            <person name="Murali S."/>
            <person name="Cantsilieris S."/>
            <person name="Meyerson O.S."/>
            <person name="Underwood J.G."/>
            <person name="Nelson B.J."/>
            <person name="Chaisson M.J.P."/>
            <person name="Dougherty M.L."/>
            <person name="Munson K.M."/>
            <person name="Hastie A.R."/>
            <person name="Diekhans M."/>
            <person name="Hormozdiari F."/>
            <person name="Lorusso N."/>
            <person name="Hoekzema K."/>
            <person name="Qiu R."/>
            <person name="Clark K."/>
            <person name="Raja A."/>
            <person name="Welch A.E."/>
            <person name="Sorensen M."/>
            <person name="Baker C."/>
            <person name="Fulton R.S."/>
            <person name="Armstrong J."/>
            <person name="Graves-Lindsay T.A."/>
            <person name="Denli A.M."/>
            <person name="Hoppe E.R."/>
            <person name="Hsieh P."/>
            <person name="Hill C.M."/>
            <person name="Pang A.W.C."/>
            <person name="Lee J."/>
            <person name="Lam E.T."/>
            <person name="Dutcher S.K."/>
            <person name="Gage F.H."/>
            <person name="Warren W.C."/>
            <person name="Shendure J."/>
            <person name="Haussler D."/>
            <person name="Schneider V.A."/>
            <person name="Cao H."/>
            <person name="Ventura M."/>
            <person name="Wilson R.K."/>
            <person name="Paten B."/>
            <person name="Pollen A."/>
            <person name="Eichler E.E."/>
        </authorList>
    </citation>
    <scope>NUCLEOTIDE SEQUENCE [LARGE SCALE GENOMIC DNA]</scope>
</reference>
<reference key="2">
    <citation type="submission" date="2004-11" db="EMBL/GenBank/DDBJ databases">
        <authorList>
            <consortium name="The German cDNA consortium"/>
        </authorList>
    </citation>
    <scope>NUCLEOTIDE SEQUENCE [LARGE SCALE MRNA]</scope>
    <source>
        <tissue>Kidney</tissue>
    </source>
</reference>
<keyword id="KW-1185">Reference proteome</keyword>